<sequence>MNNKINNIKITQVQSAIGRKYDQRLILVGLGLNKINKSVILANTNSIKGMVEKVKHLLKIENM</sequence>
<feature type="chain" id="PRO_1000068199" description="Large ribosomal subunit protein uL30">
    <location>
        <begin position="1"/>
        <end position="63"/>
    </location>
</feature>
<gene>
    <name evidence="1" type="primary">rpmD</name>
    <name type="ordered locus">RMA_1022</name>
</gene>
<proteinExistence type="inferred from homology"/>
<protein>
    <recommendedName>
        <fullName evidence="1">Large ribosomal subunit protein uL30</fullName>
    </recommendedName>
    <alternativeName>
        <fullName evidence="2">50S ribosomal protein L30</fullName>
    </alternativeName>
</protein>
<accession>A8F2C9</accession>
<organism>
    <name type="scientific">Rickettsia massiliae (strain Mtu5)</name>
    <dbReference type="NCBI Taxonomy" id="416276"/>
    <lineage>
        <taxon>Bacteria</taxon>
        <taxon>Pseudomonadati</taxon>
        <taxon>Pseudomonadota</taxon>
        <taxon>Alphaproteobacteria</taxon>
        <taxon>Rickettsiales</taxon>
        <taxon>Rickettsiaceae</taxon>
        <taxon>Rickettsieae</taxon>
        <taxon>Rickettsia</taxon>
        <taxon>spotted fever group</taxon>
    </lineage>
</organism>
<reference key="1">
    <citation type="journal article" date="2007" name="Genome Res.">
        <title>Lateral gene transfer between obligate intracellular bacteria: evidence from the Rickettsia massiliae genome.</title>
        <authorList>
            <person name="Blanc G."/>
            <person name="Ogata H."/>
            <person name="Robert C."/>
            <person name="Audic S."/>
            <person name="Claverie J.-M."/>
            <person name="Raoult D."/>
        </authorList>
    </citation>
    <scope>NUCLEOTIDE SEQUENCE [LARGE SCALE GENOMIC DNA]</scope>
    <source>
        <strain>Mtu5</strain>
    </source>
</reference>
<comment type="subunit">
    <text evidence="1">Part of the 50S ribosomal subunit.</text>
</comment>
<comment type="similarity">
    <text evidence="1">Belongs to the universal ribosomal protein uL30 family.</text>
</comment>
<name>RL30_RICM5</name>
<keyword id="KW-0687">Ribonucleoprotein</keyword>
<keyword id="KW-0689">Ribosomal protein</keyword>
<evidence type="ECO:0000255" key="1">
    <source>
        <dbReference type="HAMAP-Rule" id="MF_01371"/>
    </source>
</evidence>
<evidence type="ECO:0000305" key="2"/>
<dbReference type="EMBL" id="CP000683">
    <property type="protein sequence ID" value="ABV85065.1"/>
    <property type="molecule type" value="Genomic_DNA"/>
</dbReference>
<dbReference type="RefSeq" id="WP_012153031.1">
    <property type="nucleotide sequence ID" value="NC_009900.1"/>
</dbReference>
<dbReference type="SMR" id="A8F2C9"/>
<dbReference type="KEGG" id="rms:RMA_1022"/>
<dbReference type="HOGENOM" id="CLU_131047_1_5_5"/>
<dbReference type="Proteomes" id="UP000001311">
    <property type="component" value="Chromosome"/>
</dbReference>
<dbReference type="GO" id="GO:0022625">
    <property type="term" value="C:cytosolic large ribosomal subunit"/>
    <property type="evidence" value="ECO:0007669"/>
    <property type="project" value="TreeGrafter"/>
</dbReference>
<dbReference type="GO" id="GO:0003735">
    <property type="term" value="F:structural constituent of ribosome"/>
    <property type="evidence" value="ECO:0007669"/>
    <property type="project" value="InterPro"/>
</dbReference>
<dbReference type="GO" id="GO:0006412">
    <property type="term" value="P:translation"/>
    <property type="evidence" value="ECO:0007669"/>
    <property type="project" value="UniProtKB-UniRule"/>
</dbReference>
<dbReference type="CDD" id="cd01658">
    <property type="entry name" value="Ribosomal_L30"/>
    <property type="match status" value="1"/>
</dbReference>
<dbReference type="Gene3D" id="3.30.1390.20">
    <property type="entry name" value="Ribosomal protein L30, ferredoxin-like fold domain"/>
    <property type="match status" value="1"/>
</dbReference>
<dbReference type="HAMAP" id="MF_01371_B">
    <property type="entry name" value="Ribosomal_uL30_B"/>
    <property type="match status" value="1"/>
</dbReference>
<dbReference type="InterPro" id="IPR036919">
    <property type="entry name" value="Ribo_uL30_ferredoxin-like_sf"/>
</dbReference>
<dbReference type="InterPro" id="IPR005996">
    <property type="entry name" value="Ribosomal_uL30_bac-type"/>
</dbReference>
<dbReference type="InterPro" id="IPR016082">
    <property type="entry name" value="Ribosomal_uL30_ferredoxin-like"/>
</dbReference>
<dbReference type="NCBIfam" id="TIGR01308">
    <property type="entry name" value="rpmD_bact"/>
    <property type="match status" value="1"/>
</dbReference>
<dbReference type="PANTHER" id="PTHR15892:SF2">
    <property type="entry name" value="LARGE RIBOSOMAL SUBUNIT PROTEIN UL30M"/>
    <property type="match status" value="1"/>
</dbReference>
<dbReference type="PANTHER" id="PTHR15892">
    <property type="entry name" value="MITOCHONDRIAL RIBOSOMAL PROTEIN L30"/>
    <property type="match status" value="1"/>
</dbReference>
<dbReference type="Pfam" id="PF00327">
    <property type="entry name" value="Ribosomal_L30"/>
    <property type="match status" value="1"/>
</dbReference>
<dbReference type="PIRSF" id="PIRSF002211">
    <property type="entry name" value="Ribosomal_L30_bac-type"/>
    <property type="match status" value="1"/>
</dbReference>
<dbReference type="SUPFAM" id="SSF55129">
    <property type="entry name" value="Ribosomal protein L30p/L7e"/>
    <property type="match status" value="1"/>
</dbReference>